<organism>
    <name type="scientific">Hamiltonella defensa subsp. Acyrthosiphon pisum (strain 5AT)</name>
    <dbReference type="NCBI Taxonomy" id="572265"/>
    <lineage>
        <taxon>Bacteria</taxon>
        <taxon>Pseudomonadati</taxon>
        <taxon>Pseudomonadota</taxon>
        <taxon>Gammaproteobacteria</taxon>
        <taxon>Enterobacterales</taxon>
        <taxon>Enterobacteriaceae</taxon>
        <taxon>aphid secondary symbionts</taxon>
        <taxon>Candidatus Hamiltonella</taxon>
    </lineage>
</organism>
<feature type="chain" id="PRO_1000201721" description="Thymidylate synthase">
    <location>
        <begin position="1"/>
        <end position="264"/>
    </location>
</feature>
<feature type="active site" description="Nucleophile" evidence="1">
    <location>
        <position position="146"/>
    </location>
</feature>
<feature type="binding site" description="in other chain" evidence="1">
    <location>
        <position position="21"/>
    </location>
    <ligand>
        <name>dUMP</name>
        <dbReference type="ChEBI" id="CHEBI:246422"/>
        <note>ligand shared between dimeric partners</note>
    </ligand>
</feature>
<feature type="binding site" evidence="1">
    <location>
        <position position="51"/>
    </location>
    <ligand>
        <name>(6R)-5,10-methylene-5,6,7,8-tetrahydrofolate</name>
        <dbReference type="ChEBI" id="CHEBI:15636"/>
    </ligand>
</feature>
<feature type="binding site" evidence="1">
    <location>
        <begin position="126"/>
        <end position="127"/>
    </location>
    <ligand>
        <name>dUMP</name>
        <dbReference type="ChEBI" id="CHEBI:246422"/>
        <note>ligand shared between dimeric partners</note>
    </ligand>
</feature>
<feature type="binding site" description="in other chain" evidence="1">
    <location>
        <begin position="166"/>
        <end position="169"/>
    </location>
    <ligand>
        <name>dUMP</name>
        <dbReference type="ChEBI" id="CHEBI:246422"/>
        <note>ligand shared between dimeric partners</note>
    </ligand>
</feature>
<feature type="binding site" evidence="1">
    <location>
        <position position="169"/>
    </location>
    <ligand>
        <name>(6R)-5,10-methylene-5,6,7,8-tetrahydrofolate</name>
        <dbReference type="ChEBI" id="CHEBI:15636"/>
    </ligand>
</feature>
<feature type="binding site" description="in other chain" evidence="1">
    <location>
        <position position="177"/>
    </location>
    <ligand>
        <name>dUMP</name>
        <dbReference type="ChEBI" id="CHEBI:246422"/>
        <note>ligand shared between dimeric partners</note>
    </ligand>
</feature>
<feature type="binding site" description="in other chain" evidence="1">
    <location>
        <begin position="207"/>
        <end position="209"/>
    </location>
    <ligand>
        <name>dUMP</name>
        <dbReference type="ChEBI" id="CHEBI:246422"/>
        <note>ligand shared between dimeric partners</note>
    </ligand>
</feature>
<feature type="binding site" evidence="1">
    <location>
        <position position="263"/>
    </location>
    <ligand>
        <name>(6R)-5,10-methylene-5,6,7,8-tetrahydrofolate</name>
        <dbReference type="ChEBI" id="CHEBI:15636"/>
    </ligand>
</feature>
<dbReference type="EC" id="2.1.1.45" evidence="1"/>
<dbReference type="EMBL" id="CP001277">
    <property type="protein sequence ID" value="ACQ68506.1"/>
    <property type="molecule type" value="Genomic_DNA"/>
</dbReference>
<dbReference type="RefSeq" id="WP_015874268.1">
    <property type="nucleotide sequence ID" value="NC_012751.1"/>
</dbReference>
<dbReference type="SMR" id="C4K7G3"/>
<dbReference type="STRING" id="572265.HDEF_1917"/>
<dbReference type="GeneID" id="66261494"/>
<dbReference type="KEGG" id="hde:HDEF_1917"/>
<dbReference type="eggNOG" id="COG0207">
    <property type="taxonomic scope" value="Bacteria"/>
</dbReference>
<dbReference type="HOGENOM" id="CLU_021669_0_0_6"/>
<dbReference type="UniPathway" id="UPA00575"/>
<dbReference type="Proteomes" id="UP000002334">
    <property type="component" value="Chromosome"/>
</dbReference>
<dbReference type="GO" id="GO:0005829">
    <property type="term" value="C:cytosol"/>
    <property type="evidence" value="ECO:0007669"/>
    <property type="project" value="TreeGrafter"/>
</dbReference>
<dbReference type="GO" id="GO:0004799">
    <property type="term" value="F:thymidylate synthase activity"/>
    <property type="evidence" value="ECO:0007669"/>
    <property type="project" value="UniProtKB-UniRule"/>
</dbReference>
<dbReference type="GO" id="GO:0006231">
    <property type="term" value="P:dTMP biosynthetic process"/>
    <property type="evidence" value="ECO:0007669"/>
    <property type="project" value="UniProtKB-UniRule"/>
</dbReference>
<dbReference type="GO" id="GO:0006235">
    <property type="term" value="P:dTTP biosynthetic process"/>
    <property type="evidence" value="ECO:0007669"/>
    <property type="project" value="UniProtKB-UniRule"/>
</dbReference>
<dbReference type="GO" id="GO:0032259">
    <property type="term" value="P:methylation"/>
    <property type="evidence" value="ECO:0007669"/>
    <property type="project" value="UniProtKB-KW"/>
</dbReference>
<dbReference type="CDD" id="cd00351">
    <property type="entry name" value="TS_Pyrimidine_HMase"/>
    <property type="match status" value="1"/>
</dbReference>
<dbReference type="FunFam" id="3.30.572.10:FF:000001">
    <property type="entry name" value="Thymidylate synthase"/>
    <property type="match status" value="1"/>
</dbReference>
<dbReference type="Gene3D" id="3.30.572.10">
    <property type="entry name" value="Thymidylate synthase/dCMP hydroxymethylase domain"/>
    <property type="match status" value="1"/>
</dbReference>
<dbReference type="HAMAP" id="MF_00008">
    <property type="entry name" value="Thymidy_synth_bact"/>
    <property type="match status" value="1"/>
</dbReference>
<dbReference type="InterPro" id="IPR045097">
    <property type="entry name" value="Thymidate_synth/dCMP_Mease"/>
</dbReference>
<dbReference type="InterPro" id="IPR023451">
    <property type="entry name" value="Thymidate_synth/dCMP_Mease_dom"/>
</dbReference>
<dbReference type="InterPro" id="IPR036926">
    <property type="entry name" value="Thymidate_synth/dCMP_Mease_sf"/>
</dbReference>
<dbReference type="InterPro" id="IPR000398">
    <property type="entry name" value="Thymidylate_synthase"/>
</dbReference>
<dbReference type="InterPro" id="IPR020940">
    <property type="entry name" value="Thymidylate_synthase_AS"/>
</dbReference>
<dbReference type="NCBIfam" id="NF002497">
    <property type="entry name" value="PRK01827.1-3"/>
    <property type="match status" value="1"/>
</dbReference>
<dbReference type="NCBIfam" id="NF002499">
    <property type="entry name" value="PRK01827.1-5"/>
    <property type="match status" value="1"/>
</dbReference>
<dbReference type="NCBIfam" id="TIGR03284">
    <property type="entry name" value="thym_sym"/>
    <property type="match status" value="2"/>
</dbReference>
<dbReference type="PANTHER" id="PTHR11548:SF9">
    <property type="entry name" value="THYMIDYLATE SYNTHASE"/>
    <property type="match status" value="1"/>
</dbReference>
<dbReference type="PANTHER" id="PTHR11548">
    <property type="entry name" value="THYMIDYLATE SYNTHASE 1"/>
    <property type="match status" value="1"/>
</dbReference>
<dbReference type="Pfam" id="PF00303">
    <property type="entry name" value="Thymidylat_synt"/>
    <property type="match status" value="1"/>
</dbReference>
<dbReference type="PRINTS" id="PR00108">
    <property type="entry name" value="THYMDSNTHASE"/>
</dbReference>
<dbReference type="SUPFAM" id="SSF55831">
    <property type="entry name" value="Thymidylate synthase/dCMP hydroxymethylase"/>
    <property type="match status" value="1"/>
</dbReference>
<dbReference type="PROSITE" id="PS00091">
    <property type="entry name" value="THYMIDYLATE_SYNTHASE"/>
    <property type="match status" value="1"/>
</dbReference>
<comment type="function">
    <text evidence="1">Catalyzes the reductive methylation of 2'-deoxyuridine-5'-monophosphate (dUMP) to 2'-deoxythymidine-5'-monophosphate (dTMP) while utilizing 5,10-methylenetetrahydrofolate (mTHF) as the methyl donor and reductant in the reaction, yielding dihydrofolate (DHF) as a by-product. This enzymatic reaction provides an intracellular de novo source of dTMP, an essential precursor for DNA biosynthesis.</text>
</comment>
<comment type="catalytic activity">
    <reaction evidence="1">
        <text>dUMP + (6R)-5,10-methylene-5,6,7,8-tetrahydrofolate = 7,8-dihydrofolate + dTMP</text>
        <dbReference type="Rhea" id="RHEA:12104"/>
        <dbReference type="ChEBI" id="CHEBI:15636"/>
        <dbReference type="ChEBI" id="CHEBI:57451"/>
        <dbReference type="ChEBI" id="CHEBI:63528"/>
        <dbReference type="ChEBI" id="CHEBI:246422"/>
        <dbReference type="EC" id="2.1.1.45"/>
    </reaction>
</comment>
<comment type="pathway">
    <text evidence="1">Pyrimidine metabolism; dTTP biosynthesis.</text>
</comment>
<comment type="subunit">
    <text evidence="1">Homodimer.</text>
</comment>
<comment type="subcellular location">
    <subcellularLocation>
        <location evidence="1">Cytoplasm</location>
    </subcellularLocation>
</comment>
<comment type="similarity">
    <text evidence="1">Belongs to the thymidylate synthase family. Bacterial-type ThyA subfamily.</text>
</comment>
<sequence length="264" mass="30609">MKQYLHLMKKVLNEGTEKEDRTGTGTVSIFGHQMRFNLKEGFPLVTTKKCHLRSIIHELLWFLKGDTNIAYLRENQVSIWEEWADKTGSLGPIYGKQWRAWGTPDGHQVDQLSQTLELLKNNPDSRRMIVSAWNVGELDKMALAPCHAFFQFYVVKKTLSCQLYQRSCDVFLGLPFNIASYSLLMHMIAQQCDFFLGDFVWTGGDIHLYSNHLDQAHLQLTREPRSLPHLLINRKPDSLFDYHFEDFSLEKYNPYPAIKAPVAI</sequence>
<proteinExistence type="inferred from homology"/>
<reference key="1">
    <citation type="journal article" date="2009" name="Proc. Natl. Acad. Sci. U.S.A.">
        <title>Hamiltonella defensa, genome evolution of protective bacterial endosymbiont from pathogenic ancestors.</title>
        <authorList>
            <person name="Degnan P.H."/>
            <person name="Yu Y."/>
            <person name="Sisneros N."/>
            <person name="Wing R.A."/>
            <person name="Moran N.A."/>
        </authorList>
    </citation>
    <scope>NUCLEOTIDE SEQUENCE [LARGE SCALE GENOMIC DNA]</scope>
    <source>
        <strain>5AT</strain>
    </source>
</reference>
<keyword id="KW-0963">Cytoplasm</keyword>
<keyword id="KW-0489">Methyltransferase</keyword>
<keyword id="KW-0545">Nucleotide biosynthesis</keyword>
<keyword id="KW-0808">Transferase</keyword>
<accession>C4K7G3</accession>
<gene>
    <name evidence="1" type="primary">thyA</name>
    <name type="ordered locus">HDEF_1917</name>
</gene>
<name>TYSY_HAMD5</name>
<protein>
    <recommendedName>
        <fullName evidence="1">Thymidylate synthase</fullName>
        <shortName evidence="1">TS</shortName>
        <shortName evidence="1">TSase</shortName>
        <ecNumber evidence="1">2.1.1.45</ecNumber>
    </recommendedName>
</protein>
<evidence type="ECO:0000255" key="1">
    <source>
        <dbReference type="HAMAP-Rule" id="MF_00008"/>
    </source>
</evidence>